<reference key="1">
    <citation type="journal article" date="2004" name="Virology">
        <title>The genome and proteome of coliphage T1.</title>
        <authorList>
            <person name="Roberts M.D."/>
            <person name="Martin N.L."/>
            <person name="Kropinski A.M."/>
        </authorList>
    </citation>
    <scope>NUCLEOTIDE SEQUENCE [GENOMIC DNA]</scope>
</reference>
<reference key="2">
    <citation type="journal article" date="2018" name="J. Virol.">
        <title>Localization and Regulation of the T1 Unimolecular Spanin.</title>
        <authorList>
            <person name="Kongari R."/>
            <person name="Snowden J."/>
            <person name="Berry J.D."/>
            <person name="Young R."/>
        </authorList>
    </citation>
    <scope>FUNCTION</scope>
    <scope>ALTERNATIVE INITIATION</scope>
    <scope>SUBCELLULAR LOCATION</scope>
    <scope>MUTAGENESIS OF CYS-22 AND 23-SER-THR-24</scope>
    <scope>TOPOLOGY</scope>
</reference>
<evidence type="ECO:0000255" key="1"/>
<evidence type="ECO:0000269" key="2">
    <source>
    </source>
</evidence>
<evidence type="ECO:0000303" key="3">
    <source>
    </source>
</evidence>
<evidence type="ECO:0000305" key="4"/>
<evidence type="ECO:0000305" key="5">
    <source>
    </source>
</evidence>
<dbReference type="EMBL" id="AY216660">
    <property type="protein sequence ID" value="AAP49988.1"/>
    <property type="molecule type" value="Genomic_DNA"/>
</dbReference>
<dbReference type="RefSeq" id="YP_003934.1">
    <molecule id="Q6XQ97-1"/>
    <property type="nucleotide sequence ID" value="NC_005833.1"/>
</dbReference>
<dbReference type="SMR" id="Q6XQ97"/>
<dbReference type="TCDB" id="1.M.2.1.1">
    <property type="family name" value="the spanin2 (spanin2) family"/>
</dbReference>
<dbReference type="KEGG" id="vg:2773029"/>
<dbReference type="Proteomes" id="UP000001156">
    <property type="component" value="Genome"/>
</dbReference>
<dbReference type="GO" id="GO:0020002">
    <property type="term" value="C:host cell plasma membrane"/>
    <property type="evidence" value="ECO:0007669"/>
    <property type="project" value="UniProtKB-SubCell"/>
</dbReference>
<dbReference type="GO" id="GO:0016020">
    <property type="term" value="C:membrane"/>
    <property type="evidence" value="ECO:0007669"/>
    <property type="project" value="UniProtKB-KW"/>
</dbReference>
<dbReference type="GO" id="GO:0031640">
    <property type="term" value="P:killing of cells of another organism"/>
    <property type="evidence" value="ECO:0007669"/>
    <property type="project" value="UniProtKB-KW"/>
</dbReference>
<dbReference type="PROSITE" id="PS51257">
    <property type="entry name" value="PROKAR_LIPOPROTEIN"/>
    <property type="match status" value="1"/>
</dbReference>
<organism>
    <name type="scientific">Escherichia phage T1</name>
    <name type="common">Bacteriophage T1</name>
    <dbReference type="NCBI Taxonomy" id="2492962"/>
    <lineage>
        <taxon>Viruses</taxon>
        <taxon>Duplodnaviria</taxon>
        <taxon>Heunggongvirae</taxon>
        <taxon>Uroviricota</taxon>
        <taxon>Caudoviricetes</taxon>
        <taxon>Drexlerviridae</taxon>
        <taxon>Tunavirinae</taxon>
        <taxon>Tunavirus</taxon>
        <taxon>Tunavirus T1</taxon>
    </lineage>
</organism>
<comment type="function">
    <molecule>Isoform gp11</molecule>
    <text evidence="2">Disrupts the host outer membrane and participates in cell lysis during virus exit (PubMed:30135120). The spanin complex conducts the final step in host lysis by disrupting the outer membrane after holin and endolysin action have permeabilized the inner membrane and degraded the host peptidoglycans (PubMed:30135120). Host outer membrane disruption is possibly due to local fusion between the inner and outer membrane performed by the spanin (PubMed:30135120).</text>
</comment>
<comment type="function">
    <molecule>Isoform gp11a</molecule>
    <text evidence="2">Seems to have a dominant negative lysis delay effect on gp11 function. May serve as an intrinsic anti-spanin, providing another level of regulation for u-spanin function.</text>
</comment>
<comment type="subcellular location">
    <molecule>Isoform gp11</molecule>
    <subcellularLocation>
        <location>Host cell inner membrane</location>
        <topology evidence="2">Single-pass membrane protein</topology>
    </subcellularLocation>
    <subcellularLocation>
        <location>Host cell outer membrane</location>
        <topology evidence="2">Lipid-anchor</topology>
    </subcellularLocation>
    <text evidence="2">Inserted simultaneously in the host inner membrane and lipid-anchored in the host outer membrane, thereby spaning the whole periplasmic space.</text>
</comment>
<comment type="alternative products">
    <event type="alternative initiation"/>
    <isoform>
        <id>Q6XQ97-1</id>
        <name>gp11</name>
        <sequence type="displayed"/>
    </isoform>
    <isoform>
        <id>Q6XQ97-2</id>
        <name>gp11a</name>
        <sequence type="described" ref="VSP_060154 VSP_060172"/>
    </isoform>
    <isoform>
        <id>Q6XQ97-3</id>
        <name>gp11a'</name>
        <sequence type="described" ref="VSP_060155 VSP_060173"/>
    </isoform>
</comment>
<comment type="miscellaneous">
    <molecule>Isoform gp11a</molecule>
    <text evidence="2">The initiator methionine is coded by a non-canonical GTG valine codon.</text>
</comment>
<comment type="miscellaneous">
    <molecule>Isoform gp11a'</molecule>
    <text evidence="2">The initiator methionine is coded by a non-canonical GTG valine codon.</text>
</comment>
<proteinExistence type="evidence at protein level"/>
<sequence>MKLKKTCIAITVAVGVISLSGCSTASALSGLLSDSPDVTAQVGAENTKQLAGVTAKADDKREVKVSDSNIGKIDSSVKKSVEVSTIQANTVNAESITVTKSGSWYDPVVCWILVFIVLLLFYFLIRKHEKKEA</sequence>
<organismHost>
    <name type="scientific">Escherichia coli</name>
    <dbReference type="NCBI Taxonomy" id="562"/>
</organismHost>
<name>SPANU_BPT1</name>
<feature type="signal peptide" evidence="1">
    <location>
        <begin position="1"/>
        <end position="21"/>
    </location>
</feature>
<feature type="chain" id="PRO_0000429264" description="U-spanin">
    <location>
        <begin position="22"/>
        <end position="133"/>
    </location>
</feature>
<feature type="topological domain" description="Periplasmic" evidence="5">
    <location>
        <begin position="22"/>
        <end position="104"/>
    </location>
</feature>
<feature type="transmembrane region" description="Helical" evidence="2">
    <location>
        <begin position="105"/>
        <end position="125"/>
    </location>
</feature>
<feature type="topological domain" description="Cytoplasmic" evidence="5">
    <location>
        <begin position="126"/>
        <end position="133"/>
    </location>
</feature>
<feature type="lipid moiety-binding region" description="N-palmitoyl cysteine; by host" evidence="1">
    <location>
        <position position="22"/>
    </location>
</feature>
<feature type="lipid moiety-binding region" description="S-diacylglycerol cysteine; by host" evidence="1">
    <location>
        <position position="22"/>
    </location>
</feature>
<feature type="splice variant" id="VSP_060155" description="In isoform gp11a'." evidence="2">
    <location>
        <begin position="1"/>
        <end position="64"/>
    </location>
</feature>
<feature type="splice variant" id="VSP_060154" description="In isoform gp11a." evidence="2">
    <location>
        <begin position="1"/>
        <end position="62"/>
    </location>
</feature>
<feature type="splice variant" id="VSP_060172" description="In isoform gp11a." evidence="2">
    <original>V</original>
    <variation>M</variation>
    <location>
        <position position="63"/>
    </location>
</feature>
<feature type="splice variant" id="VSP_060173" description="In isoform gp11a'." evidence="2">
    <original>V</original>
    <variation>M</variation>
    <location>
        <position position="65"/>
    </location>
</feature>
<feature type="mutagenesis site" description="Complete loss of lysis." evidence="2">
    <original>C</original>
    <variation>S</variation>
    <location>
        <position position="22"/>
    </location>
</feature>
<feature type="mutagenesis site" description="Complete loss of lysis." evidence="2">
    <original>ST</original>
    <variation>DD</variation>
    <location>
        <begin position="23"/>
        <end position="24"/>
    </location>
</feature>
<accession>Q6XQ97</accession>
<keyword id="KW-0024">Alternative initiation</keyword>
<keyword id="KW-0204">Cytolysis</keyword>
<keyword id="KW-1030">Host cell inner membrane</keyword>
<keyword id="KW-0578">Host cell lysis by virus</keyword>
<keyword id="KW-1032">Host cell membrane</keyword>
<keyword id="KW-1033">Host cell outer membrane</keyword>
<keyword id="KW-1043">Host membrane</keyword>
<keyword id="KW-0449">Lipoprotein</keyword>
<keyword id="KW-0472">Membrane</keyword>
<keyword id="KW-0564">Palmitate</keyword>
<keyword id="KW-1185">Reference proteome</keyword>
<keyword id="KW-0732">Signal</keyword>
<keyword id="KW-0812">Transmembrane</keyword>
<keyword id="KW-1133">Transmembrane helix</keyword>
<keyword id="KW-1188">Viral release from host cell</keyword>
<protein>
    <recommendedName>
        <fullName>U-spanin</fullName>
    </recommendedName>
    <alternativeName>
        <fullName evidence="4">Gene product 11</fullName>
    </alternativeName>
    <alternativeName>
        <fullName evidence="3">Unimolecular spanin</fullName>
    </alternativeName>
    <alternativeName>
        <fullName evidence="3">gp11</fullName>
    </alternativeName>
</protein>
<gene>
    <name type="ORF">11</name>
</gene>